<feature type="signal peptide" evidence="1">
    <location>
        <begin position="1"/>
        <end position="35"/>
    </location>
</feature>
<feature type="chain" id="PRO_0000022108" description="Proline-rich membrane anchor 1">
    <location>
        <begin position="36"/>
        <end position="153"/>
    </location>
</feature>
<feature type="topological domain" description="Extracellular" evidence="2">
    <location>
        <begin position="36"/>
        <end position="92"/>
    </location>
</feature>
<feature type="transmembrane region" description="Helical" evidence="2">
    <location>
        <begin position="93"/>
        <end position="113"/>
    </location>
</feature>
<feature type="topological domain" description="Cytoplasmic" evidence="2">
    <location>
        <begin position="114"/>
        <end position="153"/>
    </location>
</feature>
<feature type="domain" description="PRAD">
    <location>
        <begin position="56"/>
        <end position="70"/>
    </location>
</feature>
<feature type="region of interest" description="Disordered" evidence="3">
    <location>
        <begin position="59"/>
        <end position="79"/>
    </location>
</feature>
<feature type="region of interest" description="Disordered" evidence="3">
    <location>
        <begin position="129"/>
        <end position="153"/>
    </location>
</feature>
<feature type="compositionally biased region" description="Pro residues" evidence="3">
    <location>
        <begin position="59"/>
        <end position="71"/>
    </location>
</feature>
<feature type="glycosylation site" description="N-linked (GlcNAc...) asparagine" evidence="2">
    <location>
        <position position="79"/>
    </location>
</feature>
<feature type="splice variant" id="VSP_008496" description="In isoform 2." evidence="7">
    <original>KPLR</original>
    <variation>NQAI</variation>
    <location>
        <begin position="121"/>
        <end position="124"/>
    </location>
</feature>
<feature type="splice variant" id="VSP_008497" description="In isoform 2." evidence="7">
    <location>
        <begin position="125"/>
        <end position="153"/>
    </location>
</feature>
<feature type="mutagenesis site" description="Decrease in ACHE tetramer recruitment to membrane rafts." evidence="6">
    <original>VLVIICYKAIKRK</original>
    <variation>GIAIICLKAISDM</variation>
    <location>
        <begin position="109"/>
        <end position="121"/>
    </location>
</feature>
<feature type="mutagenesis site" description="Does not abolish the localization of ACHE." evidence="4 6">
    <original>C</original>
    <variation>A</variation>
    <location>
        <position position="114"/>
    </location>
</feature>
<feature type="mutagenesis site" description="No effect on ACHE tetramer recruitment to membrane rafts." evidence="4 6">
    <original>C</original>
    <variation>S</variation>
    <location>
        <position position="114"/>
    </location>
</feature>
<feature type="mutagenesis site" description="No effect on ACHE tetramer recruitment to membrane rafts; when associated with 138-A--A-142.">
    <original>S</original>
    <variation>A</variation>
    <location>
        <position position="131"/>
    </location>
</feature>
<feature type="mutagenesis site" description="No effect on ACHE tetramer recruitment to membrane rafts; when associated with A-131." evidence="6">
    <original>SSSQS</original>
    <variation>AAAQA</variation>
    <location>
        <begin position="138"/>
        <end position="142"/>
    </location>
</feature>
<reference key="1">
    <citation type="journal article" date="2002" name="Neuron">
        <title>PRiMA: the membrane anchor of acetylcholinesterase in the brain.</title>
        <authorList>
            <person name="Perrier A.L."/>
            <person name="Massoulie J."/>
            <person name="Krejci E."/>
        </authorList>
    </citation>
    <scope>NUCLEOTIDE SEQUENCE [MRNA] (ISOFORMS 1 AND 2)</scope>
    <scope>FUNCTION</scope>
    <scope>SUBCELLULAR LOCATION</scope>
    <scope>TISSUE SPECIFICITY</scope>
    <scope>DOMAIN</scope>
    <scope>INTERACTION WITH ACHE</scope>
    <scope>MUTAGENESIS OF CYS-114</scope>
    <source>
        <tissue>Neuroblastoma</tissue>
    </source>
</reference>
<reference key="2">
    <citation type="journal article" date="2003" name="Eur. J. Neurosci.">
        <title>Expression of PRiMA in the mouse brain: membrane anchoring and accumulation of 'tailed' acetylcholinesterase.</title>
        <authorList>
            <person name="Perrier N.A."/>
            <person name="Kherif S."/>
            <person name="Perrier A.L."/>
            <person name="Dumas S."/>
            <person name="Mallet J."/>
            <person name="Massoulie J."/>
        </authorList>
    </citation>
    <scope>TISSUE SPECIFICITY</scope>
</reference>
<reference key="3">
    <citation type="journal article" date="2010" name="J. Biol. Chem.">
        <title>Targeting acetylcholinesterase to membrane rafts: a function mediated by the proline-rich membrane anchor (PRiMA) in neurons.</title>
        <authorList>
            <person name="Xie H.Q."/>
            <person name="Liang D."/>
            <person name="Leung K.W."/>
            <person name="Chen V.P."/>
            <person name="Zhu K.Y."/>
            <person name="Chan W.K."/>
            <person name="Choi R.C."/>
            <person name="Massoulie J."/>
            <person name="Tsim K.W."/>
        </authorList>
    </citation>
    <scope>SUBCELLULAR LOCATION</scope>
    <scope>MUTAGENESIS OF 109-VAL--LYS-121; CYS-114 AND 138-SER--SER-142</scope>
</reference>
<evidence type="ECO:0000250" key="1"/>
<evidence type="ECO:0000255" key="2"/>
<evidence type="ECO:0000256" key="3">
    <source>
        <dbReference type="SAM" id="MobiDB-lite"/>
    </source>
</evidence>
<evidence type="ECO:0000269" key="4">
    <source>
    </source>
</evidence>
<evidence type="ECO:0000269" key="5">
    <source>
    </source>
</evidence>
<evidence type="ECO:0000269" key="6">
    <source>
    </source>
</evidence>
<evidence type="ECO:0000303" key="7">
    <source>
    </source>
</evidence>
<proteinExistence type="evidence at protein level"/>
<accession>Q810F0</accession>
<accession>Q8VHC4</accession>
<gene>
    <name type="primary">Prima1</name>
</gene>
<dbReference type="EMBL" id="AY043275">
    <property type="protein sequence ID" value="AAK85717.1"/>
    <property type="molecule type" value="mRNA"/>
</dbReference>
<dbReference type="EMBL" id="AY225515">
    <property type="protein sequence ID" value="AAO74852.1"/>
    <property type="molecule type" value="mRNA"/>
</dbReference>
<dbReference type="CCDS" id="CCDS26127.1">
    <molecule id="Q810F0-1"/>
</dbReference>
<dbReference type="RefSeq" id="NP_579942.2">
    <property type="nucleotide sequence ID" value="NM_133364.2"/>
</dbReference>
<dbReference type="CORUM" id="Q810F0"/>
<dbReference type="FunCoup" id="Q810F0">
    <property type="interactions" value="834"/>
</dbReference>
<dbReference type="STRING" id="10090.ENSMUSP00000074017"/>
<dbReference type="GlyCosmos" id="Q810F0">
    <property type="glycosylation" value="1 site, No reported glycans"/>
</dbReference>
<dbReference type="GlyGen" id="Q810F0">
    <property type="glycosylation" value="1 site"/>
</dbReference>
<dbReference type="PhosphoSitePlus" id="Q810F0"/>
<dbReference type="PaxDb" id="10090-ENSMUSP00000074017"/>
<dbReference type="ProteomicsDB" id="291811">
    <molecule id="Q810F0-1"/>
</dbReference>
<dbReference type="DNASU" id="170952"/>
<dbReference type="GeneID" id="170952"/>
<dbReference type="KEGG" id="mmu:170952"/>
<dbReference type="AGR" id="MGI:1926097"/>
<dbReference type="CTD" id="145270"/>
<dbReference type="MGI" id="MGI:1926097">
    <property type="gene designation" value="Prima1"/>
</dbReference>
<dbReference type="eggNOG" id="ENOG502S414">
    <property type="taxonomic scope" value="Eukaryota"/>
</dbReference>
<dbReference type="InParanoid" id="Q810F0"/>
<dbReference type="BioGRID-ORCS" id="170952">
    <property type="hits" value="0 hits in 76 CRISPR screens"/>
</dbReference>
<dbReference type="ChiTaRS" id="Prima1">
    <property type="organism name" value="mouse"/>
</dbReference>
<dbReference type="PRO" id="PR:Q810F0"/>
<dbReference type="Proteomes" id="UP000000589">
    <property type="component" value="Unplaced"/>
</dbReference>
<dbReference type="RNAct" id="Q810F0">
    <property type="molecule type" value="protein"/>
</dbReference>
<dbReference type="GO" id="GO:0070161">
    <property type="term" value="C:anchoring junction"/>
    <property type="evidence" value="ECO:0007669"/>
    <property type="project" value="UniProtKB-SubCell"/>
</dbReference>
<dbReference type="GO" id="GO:0005886">
    <property type="term" value="C:plasma membrane"/>
    <property type="evidence" value="ECO:0000314"/>
    <property type="project" value="MGI"/>
</dbReference>
<dbReference type="GO" id="GO:0045202">
    <property type="term" value="C:synapse"/>
    <property type="evidence" value="ECO:0007669"/>
    <property type="project" value="UniProtKB-SubCell"/>
</dbReference>
<dbReference type="GO" id="GO:0019899">
    <property type="term" value="F:enzyme binding"/>
    <property type="evidence" value="ECO:0000353"/>
    <property type="project" value="MGI"/>
</dbReference>
<dbReference type="GO" id="GO:0043495">
    <property type="term" value="F:protein-membrane adaptor activity"/>
    <property type="evidence" value="ECO:0000353"/>
    <property type="project" value="MGI"/>
</dbReference>
<dbReference type="GO" id="GO:0051649">
    <property type="term" value="P:establishment of localization in cell"/>
    <property type="evidence" value="ECO:0000314"/>
    <property type="project" value="MGI"/>
</dbReference>
<dbReference type="InterPro" id="IPR029659">
    <property type="entry name" value="PRIMA1"/>
</dbReference>
<dbReference type="Pfam" id="PF16101">
    <property type="entry name" value="PRIMA1"/>
    <property type="match status" value="1"/>
</dbReference>
<name>PRIMA_MOUSE</name>
<keyword id="KW-0025">Alternative splicing</keyword>
<keyword id="KW-0965">Cell junction</keyword>
<keyword id="KW-1003">Cell membrane</keyword>
<keyword id="KW-1015">Disulfide bond</keyword>
<keyword id="KW-0325">Glycoprotein</keyword>
<keyword id="KW-0472">Membrane</keyword>
<keyword id="KW-0531">Neurotransmitter degradation</keyword>
<keyword id="KW-1185">Reference proteome</keyword>
<keyword id="KW-0732">Signal</keyword>
<keyword id="KW-0770">Synapse</keyword>
<keyword id="KW-0812">Transmembrane</keyword>
<keyword id="KW-1133">Transmembrane helix</keyword>
<protein>
    <recommendedName>
        <fullName>Proline-rich membrane anchor 1</fullName>
        <shortName>PRiMA</shortName>
    </recommendedName>
</protein>
<organism>
    <name type="scientific">Mus musculus</name>
    <name type="common">Mouse</name>
    <dbReference type="NCBI Taxonomy" id="10090"/>
    <lineage>
        <taxon>Eukaryota</taxon>
        <taxon>Metazoa</taxon>
        <taxon>Chordata</taxon>
        <taxon>Craniata</taxon>
        <taxon>Vertebrata</taxon>
        <taxon>Euteleostomi</taxon>
        <taxon>Mammalia</taxon>
        <taxon>Eutheria</taxon>
        <taxon>Euarchontoglires</taxon>
        <taxon>Glires</taxon>
        <taxon>Rodentia</taxon>
        <taxon>Myomorpha</taxon>
        <taxon>Muroidea</taxon>
        <taxon>Muridae</taxon>
        <taxon>Murinae</taxon>
        <taxon>Mus</taxon>
        <taxon>Mus</taxon>
    </lineage>
</organism>
<comment type="function">
    <text evidence="4">Required to anchor acetylcholinesterase (ACHE) to the basal lamina of the neuromuscular junction and to the membrane of neuronal synapses in brain. Also able to organize ACHE into tetramers.</text>
</comment>
<comment type="subunit">
    <text evidence="4">Interacts with ACHE, probably through disulfide bonds.</text>
</comment>
<comment type="subcellular location">
    <subcellularLocation>
        <location>Cell membrane</location>
        <topology>Single-pass type I membrane protein</topology>
    </subcellularLocation>
    <subcellularLocation>
        <location>Cell junction</location>
    </subcellularLocation>
    <subcellularLocation>
        <location>Synapse</location>
    </subcellularLocation>
    <text>In the brain, PRIMA linked to ACHE is found in membrane rafts.</text>
</comment>
<comment type="alternative products">
    <event type="alternative splicing"/>
    <isoform>
        <id>Q810F0-1</id>
        <name>1</name>
        <name>Variant I</name>
        <sequence type="displayed"/>
    </isoform>
    <isoform>
        <id>Q810F0-2</id>
        <name>2</name>
        <name>Variant II</name>
        <sequence type="described" ref="VSP_008496 VSP_008497"/>
    </isoform>
</comment>
<comment type="tissue specificity">
    <text evidence="4 5">Predominantly expressed in the central nervous system, including in the brain. Also expressed in muscle, heart and kidney. Isoform 1 may be predominant in the cortex and striatum, while isoform 2 is more abundant in the cerebellum.</text>
</comment>
<comment type="domain">
    <text evidence="4">The proline-rich attachment domain (PRAD) binds the AChE catalytic subunits.</text>
</comment>
<sequence length="153" mass="16564">MLLRDLVPRHGCCWPSLLLHCALHPLWGLVQVTHAEPQKSCSKVTDSCQHICQCRPPPPLPPPPPPPPPPRLLSAPAPNSTSCPAEDSWWSGLVIIVAVVCASLVFLTVLVIICYKAIKRKPLRKDENGTSVAEYPMSSSQSHKGVDVNAAVV</sequence>